<comment type="function">
    <text evidence="1">Responsible for the release of ribosomes from messenger RNA at the termination of protein biosynthesis. May increase the efficiency of translation by recycling ribosomes from one round of translation to another.</text>
</comment>
<comment type="subcellular location">
    <subcellularLocation>
        <location evidence="1">Cytoplasm</location>
    </subcellularLocation>
</comment>
<comment type="similarity">
    <text evidence="1">Belongs to the RRF family.</text>
</comment>
<reference key="1">
    <citation type="journal article" date="2005" name="J. Bacteriol.">
        <title>Completion of the genome sequence of Brucella abortus and comparison to the highly similar genomes of Brucella melitensis and Brucella suis.</title>
        <authorList>
            <person name="Halling S.M."/>
            <person name="Peterson-Burch B.D."/>
            <person name="Bricker B.J."/>
            <person name="Zuerner R.L."/>
            <person name="Qing Z."/>
            <person name="Li L.-L."/>
            <person name="Kapur V."/>
            <person name="Alt D.P."/>
            <person name="Olsen S.C."/>
        </authorList>
    </citation>
    <scope>NUCLEOTIDE SEQUENCE [LARGE SCALE GENOMIC DNA]</scope>
    <source>
        <strain>9-941</strain>
    </source>
</reference>
<proteinExistence type="inferred from homology"/>
<dbReference type="EMBL" id="AE017223">
    <property type="protein sequence ID" value="AAX74504.1"/>
    <property type="molecule type" value="Genomic_DNA"/>
</dbReference>
<dbReference type="RefSeq" id="WP_002964286.1">
    <property type="nucleotide sequence ID" value="NC_006932.1"/>
</dbReference>
<dbReference type="SMR" id="Q57CY0"/>
<dbReference type="EnsemblBacteria" id="AAX74504">
    <property type="protein sequence ID" value="AAX74504"/>
    <property type="gene ID" value="BruAb1_1165"/>
</dbReference>
<dbReference type="GeneID" id="97533591"/>
<dbReference type="KEGG" id="bmb:BruAb1_1165"/>
<dbReference type="HOGENOM" id="CLU_073981_2_0_5"/>
<dbReference type="Proteomes" id="UP000000540">
    <property type="component" value="Chromosome I"/>
</dbReference>
<dbReference type="GO" id="GO:0005829">
    <property type="term" value="C:cytosol"/>
    <property type="evidence" value="ECO:0007669"/>
    <property type="project" value="GOC"/>
</dbReference>
<dbReference type="GO" id="GO:0043023">
    <property type="term" value="F:ribosomal large subunit binding"/>
    <property type="evidence" value="ECO:0007669"/>
    <property type="project" value="TreeGrafter"/>
</dbReference>
<dbReference type="GO" id="GO:0002184">
    <property type="term" value="P:cytoplasmic translational termination"/>
    <property type="evidence" value="ECO:0007669"/>
    <property type="project" value="TreeGrafter"/>
</dbReference>
<dbReference type="CDD" id="cd00520">
    <property type="entry name" value="RRF"/>
    <property type="match status" value="1"/>
</dbReference>
<dbReference type="FunFam" id="1.10.132.20:FF:000001">
    <property type="entry name" value="Ribosome-recycling factor"/>
    <property type="match status" value="1"/>
</dbReference>
<dbReference type="FunFam" id="3.30.1360.40:FF:000001">
    <property type="entry name" value="Ribosome-recycling factor"/>
    <property type="match status" value="1"/>
</dbReference>
<dbReference type="Gene3D" id="3.30.1360.40">
    <property type="match status" value="1"/>
</dbReference>
<dbReference type="Gene3D" id="1.10.132.20">
    <property type="entry name" value="Ribosome-recycling factor"/>
    <property type="match status" value="1"/>
</dbReference>
<dbReference type="HAMAP" id="MF_00040">
    <property type="entry name" value="RRF"/>
    <property type="match status" value="1"/>
</dbReference>
<dbReference type="InterPro" id="IPR002661">
    <property type="entry name" value="Ribosome_recyc_fac"/>
</dbReference>
<dbReference type="InterPro" id="IPR023584">
    <property type="entry name" value="Ribosome_recyc_fac_dom"/>
</dbReference>
<dbReference type="InterPro" id="IPR036191">
    <property type="entry name" value="RRF_sf"/>
</dbReference>
<dbReference type="NCBIfam" id="TIGR00496">
    <property type="entry name" value="frr"/>
    <property type="match status" value="1"/>
</dbReference>
<dbReference type="PANTHER" id="PTHR20982:SF3">
    <property type="entry name" value="MITOCHONDRIAL RIBOSOME RECYCLING FACTOR PSEUDO 1"/>
    <property type="match status" value="1"/>
</dbReference>
<dbReference type="PANTHER" id="PTHR20982">
    <property type="entry name" value="RIBOSOME RECYCLING FACTOR"/>
    <property type="match status" value="1"/>
</dbReference>
<dbReference type="Pfam" id="PF01765">
    <property type="entry name" value="RRF"/>
    <property type="match status" value="1"/>
</dbReference>
<dbReference type="SUPFAM" id="SSF55194">
    <property type="entry name" value="Ribosome recycling factor, RRF"/>
    <property type="match status" value="1"/>
</dbReference>
<protein>
    <recommendedName>
        <fullName evidence="1">Ribosome-recycling factor</fullName>
        <shortName evidence="1">RRF</shortName>
    </recommendedName>
    <alternativeName>
        <fullName evidence="1">Ribosome-releasing factor</fullName>
    </alternativeName>
</protein>
<keyword id="KW-0963">Cytoplasm</keyword>
<keyword id="KW-0648">Protein biosynthesis</keyword>
<name>RRF_BRUAB</name>
<accession>Q57CY0</accession>
<feature type="chain" id="PRO_0000167425" description="Ribosome-recycling factor">
    <location>
        <begin position="1"/>
        <end position="186"/>
    </location>
</feature>
<sequence length="186" mass="20664">MSDAFDINDLKRRMEGAVNALKHDLGGLRTGRASASLLEPITIEAYGSTMPINQVANISVPESRMLSVSVWDKSMVGAVERAIRDSGLGLNPITDGMTLRIPLPELNEQRRKELVKIAHQYAEQGRIAARHVRRDGMDQLKKLEKDSVISQDESRVLSEKVQKLTDDTIAEMDKIVAVKEGEIMQV</sequence>
<organism>
    <name type="scientific">Brucella abortus biovar 1 (strain 9-941)</name>
    <dbReference type="NCBI Taxonomy" id="262698"/>
    <lineage>
        <taxon>Bacteria</taxon>
        <taxon>Pseudomonadati</taxon>
        <taxon>Pseudomonadota</taxon>
        <taxon>Alphaproteobacteria</taxon>
        <taxon>Hyphomicrobiales</taxon>
        <taxon>Brucellaceae</taxon>
        <taxon>Brucella/Ochrobactrum group</taxon>
        <taxon>Brucella</taxon>
    </lineage>
</organism>
<gene>
    <name evidence="1" type="primary">frr</name>
    <name type="ordered locus">BruAb1_1165</name>
</gene>
<evidence type="ECO:0000255" key="1">
    <source>
        <dbReference type="HAMAP-Rule" id="MF_00040"/>
    </source>
</evidence>